<geneLocation type="plasmid">
    <name>pME2001</name>
</geneLocation>
<geneLocation type="plasmid">
    <name>pMTBMA4</name>
</geneLocation>
<organism>
    <name type="scientific">Methanothermobacter marburgensis (strain ATCC BAA-927 / DSM 2133 / JCM 14651 / NBRC 100331 / OCM 82 / Marburg)</name>
    <name type="common">Methanobacterium thermoautotrophicum</name>
    <dbReference type="NCBI Taxonomy" id="79929"/>
    <lineage>
        <taxon>Archaea</taxon>
        <taxon>Methanobacteriati</taxon>
        <taxon>Methanobacteriota</taxon>
        <taxon>Methanomada group</taxon>
        <taxon>Methanobacteria</taxon>
        <taxon>Methanobacteriales</taxon>
        <taxon>Methanobacteriaceae</taxon>
        <taxon>Methanothermobacter</taxon>
    </lineage>
</organism>
<accession>P14934</accession>
<accession>D9PYX3</accession>
<sequence length="133" mass="15292">MPLSLATSNRVPEAWRDLIISAMSNLAPLGRDPNTKEFTDELHHLSGEDMGTVMEILGIAVAEGFLEYDDHYRLILGPAGEEYVRLSSRVKVEETRRLTLRRALRRFRDKRRACRHLSLGDKALYDYYYHGGL</sequence>
<proteinExistence type="predicted"/>
<feature type="chain" id="PRO_0000066382" description="Uncharacterized protein MTBMA_p00020">
    <location>
        <begin position="1"/>
        <end position="133"/>
    </location>
</feature>
<protein>
    <recommendedName>
        <fullName>Uncharacterized protein MTBMA_p00020</fullName>
    </recommendedName>
</protein>
<name>Y2002_METTM</name>
<gene>
    <name type="ordered locus">MTBMA_p00020</name>
</gene>
<keyword id="KW-0614">Plasmid</keyword>
<dbReference type="EMBL" id="X17205">
    <property type="protein sequence ID" value="CAA35076.1"/>
    <property type="molecule type" value="Genomic_DNA"/>
</dbReference>
<dbReference type="EMBL" id="CP001711">
    <property type="protein sequence ID" value="ADL59367.1"/>
    <property type="molecule type" value="Genomic_DNA"/>
</dbReference>
<dbReference type="RefSeq" id="WP_010868906.1">
    <property type="nucleotide sequence ID" value="NC_014409.1"/>
</dbReference>
<dbReference type="GeneID" id="9705510"/>
<dbReference type="KEGG" id="mmg:MTBMA_p00020"/>
<dbReference type="HOGENOM" id="CLU_1901968_0_0_2"/>
<dbReference type="Proteomes" id="UP000000345">
    <property type="component" value="Plasmid pMTBMA4"/>
</dbReference>
<reference key="1">
    <citation type="journal article" date="1990" name="Nucleic Acids Res.">
        <title>Complete nucleotide sequence of plasmid pME2001 of Methanobacterium thermoautotrophicum (Marburg).</title>
        <authorList>
            <person name="Bokranz M."/>
            <person name="Klein A."/>
            <person name="Meile L."/>
        </authorList>
    </citation>
    <scope>NUCLEOTIDE SEQUENCE [GENOMIC DNA]</scope>
    <source>
        <strain>ATCC BAA-927 / DSM 2133 / JCM 14651 / NBRC 100331 / OCM 82 / Marburg</strain>
        <plasmid>pME2001</plasmid>
    </source>
</reference>
<reference key="2">
    <citation type="journal article" date="2010" name="J. Bacteriol.">
        <title>Complete genome sequence of Methanothermobacter marburgensis, a methanoarchaeon model organism.</title>
        <authorList>
            <person name="Liesegang H."/>
            <person name="Kaster A.K."/>
            <person name="Wiezer A."/>
            <person name="Goenrich M."/>
            <person name="Wollherr A."/>
            <person name="Seedorf H."/>
            <person name="Gottschalk G."/>
            <person name="Thauer R.K."/>
        </authorList>
    </citation>
    <scope>NUCLEOTIDE SEQUENCE [LARGE SCALE GENOMIC DNA]</scope>
    <source>
        <strain>ATCC BAA-927 / DSM 2133 / JCM 14651 / NBRC 100331 / OCM 82 / Marburg</strain>
        <plasmid>pMTBMA4</plasmid>
    </source>
</reference>